<name>NUOA_BURCM</name>
<dbReference type="EC" id="7.1.1.-" evidence="1"/>
<dbReference type="EMBL" id="CP000440">
    <property type="protein sequence ID" value="ABI87843.1"/>
    <property type="molecule type" value="Genomic_DNA"/>
</dbReference>
<dbReference type="RefSeq" id="WP_006398798.1">
    <property type="nucleotide sequence ID" value="NZ_CP009798.1"/>
</dbReference>
<dbReference type="SMR" id="Q0BDD0"/>
<dbReference type="KEGG" id="bam:Bamb_2287"/>
<dbReference type="PATRIC" id="fig|339670.21.peg.2640"/>
<dbReference type="eggNOG" id="COG0838">
    <property type="taxonomic scope" value="Bacteria"/>
</dbReference>
<dbReference type="Proteomes" id="UP000000662">
    <property type="component" value="Chromosome 1"/>
</dbReference>
<dbReference type="GO" id="GO:0030964">
    <property type="term" value="C:NADH dehydrogenase complex"/>
    <property type="evidence" value="ECO:0007669"/>
    <property type="project" value="TreeGrafter"/>
</dbReference>
<dbReference type="GO" id="GO:0005886">
    <property type="term" value="C:plasma membrane"/>
    <property type="evidence" value="ECO:0007669"/>
    <property type="project" value="UniProtKB-SubCell"/>
</dbReference>
<dbReference type="GO" id="GO:0008137">
    <property type="term" value="F:NADH dehydrogenase (ubiquinone) activity"/>
    <property type="evidence" value="ECO:0007669"/>
    <property type="project" value="InterPro"/>
</dbReference>
<dbReference type="GO" id="GO:0050136">
    <property type="term" value="F:NADH:ubiquinone reductase (non-electrogenic) activity"/>
    <property type="evidence" value="ECO:0007669"/>
    <property type="project" value="UniProtKB-UniRule"/>
</dbReference>
<dbReference type="GO" id="GO:0048038">
    <property type="term" value="F:quinone binding"/>
    <property type="evidence" value="ECO:0007669"/>
    <property type="project" value="UniProtKB-KW"/>
</dbReference>
<dbReference type="FunFam" id="1.20.58.1610:FF:000004">
    <property type="entry name" value="NADH-quinone oxidoreductase subunit A"/>
    <property type="match status" value="1"/>
</dbReference>
<dbReference type="Gene3D" id="1.20.58.1610">
    <property type="entry name" value="NADH:ubiquinone/plastoquinone oxidoreductase, chain 3"/>
    <property type="match status" value="1"/>
</dbReference>
<dbReference type="HAMAP" id="MF_01394">
    <property type="entry name" value="NDH1_NuoA"/>
    <property type="match status" value="1"/>
</dbReference>
<dbReference type="InterPro" id="IPR023043">
    <property type="entry name" value="NAD(P)H_OxRDtase_bac/plastid"/>
</dbReference>
<dbReference type="InterPro" id="IPR000440">
    <property type="entry name" value="NADH_UbQ/plastoQ_OxRdtase_su3"/>
</dbReference>
<dbReference type="InterPro" id="IPR038430">
    <property type="entry name" value="NDAH_ubi_oxred_su3_sf"/>
</dbReference>
<dbReference type="PANTHER" id="PTHR11058">
    <property type="entry name" value="NADH-UBIQUINONE OXIDOREDUCTASE CHAIN 3"/>
    <property type="match status" value="1"/>
</dbReference>
<dbReference type="PANTHER" id="PTHR11058:SF9">
    <property type="entry name" value="NADH-UBIQUINONE OXIDOREDUCTASE CHAIN 3"/>
    <property type="match status" value="1"/>
</dbReference>
<dbReference type="Pfam" id="PF00507">
    <property type="entry name" value="Oxidored_q4"/>
    <property type="match status" value="1"/>
</dbReference>
<feature type="chain" id="PRO_0000362633" description="NADH-quinone oxidoreductase subunit A">
    <location>
        <begin position="1"/>
        <end position="119"/>
    </location>
</feature>
<feature type="transmembrane region" description="Helical" evidence="1">
    <location>
        <begin position="7"/>
        <end position="27"/>
    </location>
</feature>
<feature type="transmembrane region" description="Helical" evidence="1">
    <location>
        <begin position="63"/>
        <end position="83"/>
    </location>
</feature>
<feature type="transmembrane region" description="Helical" evidence="1">
    <location>
        <begin position="88"/>
        <end position="108"/>
    </location>
</feature>
<organism>
    <name type="scientific">Burkholderia ambifaria (strain ATCC BAA-244 / DSM 16087 / CCUG 44356 / LMG 19182 / AMMD)</name>
    <name type="common">Burkholderia cepacia (strain AMMD)</name>
    <dbReference type="NCBI Taxonomy" id="339670"/>
    <lineage>
        <taxon>Bacteria</taxon>
        <taxon>Pseudomonadati</taxon>
        <taxon>Pseudomonadota</taxon>
        <taxon>Betaproteobacteria</taxon>
        <taxon>Burkholderiales</taxon>
        <taxon>Burkholderiaceae</taxon>
        <taxon>Burkholderia</taxon>
        <taxon>Burkholderia cepacia complex</taxon>
    </lineage>
</organism>
<proteinExistence type="inferred from homology"/>
<protein>
    <recommendedName>
        <fullName evidence="1">NADH-quinone oxidoreductase subunit A</fullName>
        <ecNumber evidence="1">7.1.1.-</ecNumber>
    </recommendedName>
    <alternativeName>
        <fullName evidence="1">NADH dehydrogenase I subunit A</fullName>
    </alternativeName>
    <alternativeName>
        <fullName evidence="1">NDH-1 subunit A</fullName>
    </alternativeName>
    <alternativeName>
        <fullName evidence="1">NUO1</fullName>
    </alternativeName>
</protein>
<keyword id="KW-0997">Cell inner membrane</keyword>
<keyword id="KW-1003">Cell membrane</keyword>
<keyword id="KW-0472">Membrane</keyword>
<keyword id="KW-0520">NAD</keyword>
<keyword id="KW-0874">Quinone</keyword>
<keyword id="KW-1278">Translocase</keyword>
<keyword id="KW-0812">Transmembrane</keyword>
<keyword id="KW-1133">Transmembrane helix</keyword>
<keyword id="KW-0813">Transport</keyword>
<keyword id="KW-0830">Ubiquinone</keyword>
<gene>
    <name evidence="1" type="primary">nuoA</name>
    <name type="ordered locus">Bamb_2287</name>
</gene>
<sequence>MNLAAYYPVLLFLLVGTGLGIALVSIGKLLGPNKPDVEKNAPYECGFEAFEDARMKFDVRYYLVAILFIIFDLETAFLFPWGVALRDIGWPGFIAMMIFLLEFLLGFAYIWKKGGLDWE</sequence>
<accession>Q0BDD0</accession>
<comment type="function">
    <text evidence="1">NDH-1 shuttles electrons from NADH, via FMN and iron-sulfur (Fe-S) centers, to quinones in the respiratory chain. The immediate electron acceptor for the enzyme in this species is believed to be ubiquinone. Couples the redox reaction to proton translocation (for every two electrons transferred, four hydrogen ions are translocated across the cytoplasmic membrane), and thus conserves the redox energy in a proton gradient.</text>
</comment>
<comment type="catalytic activity">
    <reaction evidence="1">
        <text>a quinone + NADH + 5 H(+)(in) = a quinol + NAD(+) + 4 H(+)(out)</text>
        <dbReference type="Rhea" id="RHEA:57888"/>
        <dbReference type="ChEBI" id="CHEBI:15378"/>
        <dbReference type="ChEBI" id="CHEBI:24646"/>
        <dbReference type="ChEBI" id="CHEBI:57540"/>
        <dbReference type="ChEBI" id="CHEBI:57945"/>
        <dbReference type="ChEBI" id="CHEBI:132124"/>
    </reaction>
</comment>
<comment type="subunit">
    <text evidence="1">NDH-1 is composed of 14 different subunits. Subunits NuoA, H, J, K, L, M, N constitute the membrane sector of the complex.</text>
</comment>
<comment type="subcellular location">
    <subcellularLocation>
        <location evidence="1">Cell inner membrane</location>
        <topology evidence="1">Multi-pass membrane protein</topology>
    </subcellularLocation>
</comment>
<comment type="similarity">
    <text evidence="1">Belongs to the complex I subunit 3 family.</text>
</comment>
<evidence type="ECO:0000255" key="1">
    <source>
        <dbReference type="HAMAP-Rule" id="MF_01394"/>
    </source>
</evidence>
<reference key="1">
    <citation type="submission" date="2006-08" db="EMBL/GenBank/DDBJ databases">
        <title>Complete sequence of chromosome 1 of Burkholderia cepacia AMMD.</title>
        <authorList>
            <person name="Copeland A."/>
            <person name="Lucas S."/>
            <person name="Lapidus A."/>
            <person name="Barry K."/>
            <person name="Detter J.C."/>
            <person name="Glavina del Rio T."/>
            <person name="Hammon N."/>
            <person name="Israni S."/>
            <person name="Pitluck S."/>
            <person name="Bruce D."/>
            <person name="Chain P."/>
            <person name="Malfatti S."/>
            <person name="Shin M."/>
            <person name="Vergez L."/>
            <person name="Schmutz J."/>
            <person name="Larimer F."/>
            <person name="Land M."/>
            <person name="Hauser L."/>
            <person name="Kyrpides N."/>
            <person name="Kim E."/>
            <person name="Parke J."/>
            <person name="Coenye T."/>
            <person name="Konstantinidis K."/>
            <person name="Ramette A."/>
            <person name="Tiedje J."/>
            <person name="Richardson P."/>
        </authorList>
    </citation>
    <scope>NUCLEOTIDE SEQUENCE [LARGE SCALE GENOMIC DNA]</scope>
    <source>
        <strain>ATCC BAA-244 / DSM 16087 / CCUG 44356 / LMG 19182 / AMMD</strain>
    </source>
</reference>